<reference key="1">
    <citation type="journal article" date="2006" name="J. Bacteriol.">
        <title>Pathogenomic sequence analysis of Bacillus cereus and Bacillus thuringiensis isolates closely related to Bacillus anthracis.</title>
        <authorList>
            <person name="Han C.S."/>
            <person name="Xie G."/>
            <person name="Challacombe J.F."/>
            <person name="Altherr M.R."/>
            <person name="Bhotika S.S."/>
            <person name="Bruce D."/>
            <person name="Campbell C.S."/>
            <person name="Campbell M.L."/>
            <person name="Chen J."/>
            <person name="Chertkov O."/>
            <person name="Cleland C."/>
            <person name="Dimitrijevic M."/>
            <person name="Doggett N.A."/>
            <person name="Fawcett J.J."/>
            <person name="Glavina T."/>
            <person name="Goodwin L.A."/>
            <person name="Hill K.K."/>
            <person name="Hitchcock P."/>
            <person name="Jackson P.J."/>
            <person name="Keim P."/>
            <person name="Kewalramani A.R."/>
            <person name="Longmire J."/>
            <person name="Lucas S."/>
            <person name="Malfatti S."/>
            <person name="McMurry K."/>
            <person name="Meincke L.J."/>
            <person name="Misra M."/>
            <person name="Moseman B.L."/>
            <person name="Mundt M."/>
            <person name="Munk A.C."/>
            <person name="Okinaka R.T."/>
            <person name="Parson-Quintana B."/>
            <person name="Reilly L.P."/>
            <person name="Richardson P."/>
            <person name="Robinson D.L."/>
            <person name="Rubin E."/>
            <person name="Saunders E."/>
            <person name="Tapia R."/>
            <person name="Tesmer J.G."/>
            <person name="Thayer N."/>
            <person name="Thompson L.S."/>
            <person name="Tice H."/>
            <person name="Ticknor L.O."/>
            <person name="Wills P.L."/>
            <person name="Brettin T.S."/>
            <person name="Gilna P."/>
        </authorList>
    </citation>
    <scope>NUCLEOTIDE SEQUENCE [LARGE SCALE GENOMIC DNA]</scope>
    <source>
        <strain>97-27</strain>
    </source>
</reference>
<comment type="subcellular location">
    <subcellularLocation>
        <location evidence="1">Cell membrane</location>
        <topology evidence="1">Single-pass membrane protein</topology>
    </subcellularLocation>
</comment>
<comment type="similarity">
    <text evidence="1">Belongs to the UPF0154 family.</text>
</comment>
<protein>
    <recommendedName>
        <fullName evidence="1">UPF0154 protein BT9727_3434</fullName>
    </recommendedName>
</protein>
<proteinExistence type="inferred from homology"/>
<accession>Q6HFC1</accession>
<evidence type="ECO:0000255" key="1">
    <source>
        <dbReference type="HAMAP-Rule" id="MF_00363"/>
    </source>
</evidence>
<gene>
    <name type="ordered locus">BT9727_3434</name>
</gene>
<sequence>MPIWLGILVGVVALVAGVALGFFIARKYMMNYLQKNPPINEQMLKMMMMQMGQKPSQKKINQMMSAMNKQQMK</sequence>
<name>Y3434_BACHK</name>
<organism>
    <name type="scientific">Bacillus thuringiensis subsp. konkukian (strain 97-27)</name>
    <dbReference type="NCBI Taxonomy" id="281309"/>
    <lineage>
        <taxon>Bacteria</taxon>
        <taxon>Bacillati</taxon>
        <taxon>Bacillota</taxon>
        <taxon>Bacilli</taxon>
        <taxon>Bacillales</taxon>
        <taxon>Bacillaceae</taxon>
        <taxon>Bacillus</taxon>
        <taxon>Bacillus cereus group</taxon>
    </lineage>
</organism>
<feature type="chain" id="PRO_1000005624" description="UPF0154 protein BT9727_3434">
    <location>
        <begin position="1"/>
        <end position="73"/>
    </location>
</feature>
<feature type="transmembrane region" description="Helical" evidence="1">
    <location>
        <begin position="3"/>
        <end position="23"/>
    </location>
</feature>
<keyword id="KW-1003">Cell membrane</keyword>
<keyword id="KW-0472">Membrane</keyword>
<keyword id="KW-0812">Transmembrane</keyword>
<keyword id="KW-1133">Transmembrane helix</keyword>
<dbReference type="EMBL" id="AE017355">
    <property type="protein sequence ID" value="AAT61641.1"/>
    <property type="molecule type" value="Genomic_DNA"/>
</dbReference>
<dbReference type="RefSeq" id="WP_001123317.1">
    <property type="nucleotide sequence ID" value="NC_005957.1"/>
</dbReference>
<dbReference type="RefSeq" id="YP_037755.1">
    <property type="nucleotide sequence ID" value="NC_005957.1"/>
</dbReference>
<dbReference type="SMR" id="Q6HFC1"/>
<dbReference type="KEGG" id="btk:BT9727_3434"/>
<dbReference type="PATRIC" id="fig|281309.8.peg.3667"/>
<dbReference type="HOGENOM" id="CLU_180108_0_1_9"/>
<dbReference type="Proteomes" id="UP000001301">
    <property type="component" value="Chromosome"/>
</dbReference>
<dbReference type="GO" id="GO:0005886">
    <property type="term" value="C:plasma membrane"/>
    <property type="evidence" value="ECO:0007669"/>
    <property type="project" value="UniProtKB-SubCell"/>
</dbReference>
<dbReference type="HAMAP" id="MF_00363">
    <property type="entry name" value="UPF0154"/>
    <property type="match status" value="1"/>
</dbReference>
<dbReference type="InterPro" id="IPR005359">
    <property type="entry name" value="UPF0154"/>
</dbReference>
<dbReference type="NCBIfam" id="NF002503">
    <property type="entry name" value="PRK01844.1"/>
    <property type="match status" value="1"/>
</dbReference>
<dbReference type="Pfam" id="PF03672">
    <property type="entry name" value="UPF0154"/>
    <property type="match status" value="1"/>
</dbReference>